<protein>
    <recommendedName>
        <fullName evidence="3">Olfactory receptor 8U3</fullName>
    </recommendedName>
    <alternativeName>
        <fullName>Olfactory receptor 1038</fullName>
    </alternativeName>
    <alternativeName>
        <fullName>Olfactory receptor 185-3</fullName>
    </alternativeName>
</protein>
<keyword id="KW-1003">Cell membrane</keyword>
<keyword id="KW-1015">Disulfide bond</keyword>
<keyword id="KW-0297">G-protein coupled receptor</keyword>
<keyword id="KW-0325">Glycoprotein</keyword>
<keyword id="KW-0472">Membrane</keyword>
<keyword id="KW-0552">Olfaction</keyword>
<keyword id="KW-0675">Receptor</keyword>
<keyword id="KW-1185">Reference proteome</keyword>
<keyword id="KW-0716">Sensory transduction</keyword>
<keyword id="KW-0807">Transducer</keyword>
<keyword id="KW-0812">Transmembrane</keyword>
<keyword id="KW-1133">Transmembrane helix</keyword>
<sequence length="319" mass="36135">MAEVNISYVSEFILKGITDRPELQAPCFVMFLTIYLVTVLGNLGLIVIIRVDSRLHTPMYFFLSHLAFVDLCYSSAITPKMMVNFVVERNTIPFHACATQLGCFLTFMITECFLLASMAYDRYVAICSPLHYSTLMSKRVCIQLVAVPYVYSFLVALFHTIITFRLTYCGPNVINHFYCDDLPLLALSCSDTHMKEILIFAFAGFDMICSSSIVLTSYLFIIAAILRIRSTQGRRKAISTCGSHMVAVTIFYGTLIFMYLQPKSNHSLDTDKMASVFYTVVIPMLNPLIYSLRNKEVKDASKKALDKGYETLKILRLSK</sequence>
<evidence type="ECO:0000255" key="1"/>
<evidence type="ECO:0000255" key="2">
    <source>
        <dbReference type="PROSITE-ProRule" id="PRU00521"/>
    </source>
</evidence>
<evidence type="ECO:0000305" key="3"/>
<evidence type="ECO:0000312" key="4">
    <source>
        <dbReference type="MGI" id="MGI:3030872"/>
    </source>
</evidence>
<dbReference type="EMBL" id="AY073075">
    <property type="protein sequence ID" value="AAL60738.1"/>
    <property type="molecule type" value="Genomic_DNA"/>
</dbReference>
<dbReference type="EMBL" id="AY318233">
    <property type="protein sequence ID" value="AAP71484.1"/>
    <property type="molecule type" value="Genomic_DNA"/>
</dbReference>
<dbReference type="RefSeq" id="NP_667224.1">
    <property type="nucleotide sequence ID" value="NM_147013.3"/>
</dbReference>
<dbReference type="SMR" id="Q8VGS1"/>
<dbReference type="FunCoup" id="Q8VGS1">
    <property type="interactions" value="1124"/>
</dbReference>
<dbReference type="GlyCosmos" id="Q8VGS1">
    <property type="glycosylation" value="2 sites, No reported glycans"/>
</dbReference>
<dbReference type="GlyGen" id="Q8VGS1">
    <property type="glycosylation" value="2 sites"/>
</dbReference>
<dbReference type="iPTMnet" id="Q8VGS1"/>
<dbReference type="PhosphoSitePlus" id="Q8VGS1"/>
<dbReference type="GeneID" id="259015"/>
<dbReference type="KEGG" id="mmu:259015"/>
<dbReference type="UCSC" id="uc008klo.1">
    <property type="organism name" value="mouse"/>
</dbReference>
<dbReference type="AGR" id="MGI:3030872"/>
<dbReference type="CTD" id="219479"/>
<dbReference type="MGI" id="MGI:3030872">
    <property type="gene designation" value="Or8u3-ps"/>
</dbReference>
<dbReference type="InParanoid" id="Q8VGS1"/>
<dbReference type="BioGRID-ORCS" id="259015">
    <property type="hits" value="0 hits in 13 CRISPR screens"/>
</dbReference>
<dbReference type="PRO" id="PR:Q8VGS1"/>
<dbReference type="Proteomes" id="UP000000589">
    <property type="component" value="Unplaced"/>
</dbReference>
<dbReference type="RNAct" id="Q8VGS1">
    <property type="molecule type" value="protein"/>
</dbReference>
<dbReference type="GO" id="GO:0005886">
    <property type="term" value="C:plasma membrane"/>
    <property type="evidence" value="ECO:0007669"/>
    <property type="project" value="UniProtKB-SubCell"/>
</dbReference>
<dbReference type="GO" id="GO:0004930">
    <property type="term" value="F:G protein-coupled receptor activity"/>
    <property type="evidence" value="ECO:0007669"/>
    <property type="project" value="UniProtKB-KW"/>
</dbReference>
<dbReference type="GO" id="GO:0004984">
    <property type="term" value="F:olfactory receptor activity"/>
    <property type="evidence" value="ECO:0007669"/>
    <property type="project" value="InterPro"/>
</dbReference>
<dbReference type="CDD" id="cd15413">
    <property type="entry name" value="7tmA_OR8K-like"/>
    <property type="match status" value="1"/>
</dbReference>
<dbReference type="FunFam" id="1.20.1070.10:FF:000003">
    <property type="entry name" value="Olfactory receptor"/>
    <property type="match status" value="1"/>
</dbReference>
<dbReference type="Gene3D" id="1.20.1070.10">
    <property type="entry name" value="Rhodopsin 7-helix transmembrane proteins"/>
    <property type="match status" value="1"/>
</dbReference>
<dbReference type="InterPro" id="IPR000276">
    <property type="entry name" value="GPCR_Rhodpsn"/>
</dbReference>
<dbReference type="InterPro" id="IPR017452">
    <property type="entry name" value="GPCR_Rhodpsn_7TM"/>
</dbReference>
<dbReference type="InterPro" id="IPR000725">
    <property type="entry name" value="Olfact_rcpt"/>
</dbReference>
<dbReference type="PANTHER" id="PTHR48018">
    <property type="entry name" value="OLFACTORY RECEPTOR"/>
    <property type="match status" value="1"/>
</dbReference>
<dbReference type="Pfam" id="PF13853">
    <property type="entry name" value="7tm_4"/>
    <property type="match status" value="1"/>
</dbReference>
<dbReference type="PRINTS" id="PR00237">
    <property type="entry name" value="GPCRRHODOPSN"/>
</dbReference>
<dbReference type="PRINTS" id="PR00245">
    <property type="entry name" value="OLFACTORYR"/>
</dbReference>
<dbReference type="SUPFAM" id="SSF81321">
    <property type="entry name" value="Family A G protein-coupled receptor-like"/>
    <property type="match status" value="1"/>
</dbReference>
<dbReference type="PROSITE" id="PS00237">
    <property type="entry name" value="G_PROTEIN_RECEP_F1_1"/>
    <property type="match status" value="1"/>
</dbReference>
<dbReference type="PROSITE" id="PS50262">
    <property type="entry name" value="G_PROTEIN_RECEP_F1_2"/>
    <property type="match status" value="1"/>
</dbReference>
<name>OR8U3_MOUSE</name>
<feature type="chain" id="PRO_0000150863" description="Olfactory receptor 8U3">
    <location>
        <begin position="1"/>
        <end position="319"/>
    </location>
</feature>
<feature type="topological domain" description="Extracellular" evidence="1">
    <location>
        <begin position="1"/>
        <end position="25"/>
    </location>
</feature>
<feature type="transmembrane region" description="Helical; Name=1" evidence="1">
    <location>
        <begin position="26"/>
        <end position="46"/>
    </location>
</feature>
<feature type="topological domain" description="Cytoplasmic" evidence="1">
    <location>
        <begin position="47"/>
        <end position="54"/>
    </location>
</feature>
<feature type="transmembrane region" description="Helical; Name=2" evidence="1">
    <location>
        <begin position="55"/>
        <end position="75"/>
    </location>
</feature>
<feature type="topological domain" description="Extracellular" evidence="1">
    <location>
        <begin position="76"/>
        <end position="99"/>
    </location>
</feature>
<feature type="transmembrane region" description="Helical; Name=3" evidence="1">
    <location>
        <begin position="100"/>
        <end position="120"/>
    </location>
</feature>
<feature type="topological domain" description="Cytoplasmic" evidence="1">
    <location>
        <begin position="121"/>
        <end position="133"/>
    </location>
</feature>
<feature type="transmembrane region" description="Helical; Name=4" evidence="1">
    <location>
        <begin position="134"/>
        <end position="154"/>
    </location>
</feature>
<feature type="topological domain" description="Extracellular" evidence="1">
    <location>
        <begin position="155"/>
        <end position="196"/>
    </location>
</feature>
<feature type="transmembrane region" description="Helical; Name=5" evidence="1">
    <location>
        <begin position="197"/>
        <end position="217"/>
    </location>
</feature>
<feature type="topological domain" description="Cytoplasmic" evidence="1">
    <location>
        <begin position="218"/>
        <end position="237"/>
    </location>
</feature>
<feature type="transmembrane region" description="Helical; Name=6" evidence="1">
    <location>
        <begin position="238"/>
        <end position="258"/>
    </location>
</feature>
<feature type="topological domain" description="Extracellular" evidence="1">
    <location>
        <begin position="259"/>
        <end position="271"/>
    </location>
</feature>
<feature type="transmembrane region" description="Helical; Name=7" evidence="1">
    <location>
        <begin position="272"/>
        <end position="292"/>
    </location>
</feature>
<feature type="topological domain" description="Cytoplasmic" evidence="1">
    <location>
        <begin position="293"/>
        <end position="319"/>
    </location>
</feature>
<feature type="glycosylation site" description="N-linked (GlcNAc...) asparagine" evidence="1">
    <location>
        <position position="5"/>
    </location>
</feature>
<feature type="glycosylation site" description="N-linked (GlcNAc...) asparagine" evidence="1">
    <location>
        <position position="265"/>
    </location>
</feature>
<feature type="disulfide bond" evidence="2">
    <location>
        <begin position="97"/>
        <end position="189"/>
    </location>
</feature>
<organism>
    <name type="scientific">Mus musculus</name>
    <name type="common">Mouse</name>
    <dbReference type="NCBI Taxonomy" id="10090"/>
    <lineage>
        <taxon>Eukaryota</taxon>
        <taxon>Metazoa</taxon>
        <taxon>Chordata</taxon>
        <taxon>Craniata</taxon>
        <taxon>Vertebrata</taxon>
        <taxon>Euteleostomi</taxon>
        <taxon>Mammalia</taxon>
        <taxon>Eutheria</taxon>
        <taxon>Euarchontoglires</taxon>
        <taxon>Glires</taxon>
        <taxon>Rodentia</taxon>
        <taxon>Myomorpha</taxon>
        <taxon>Muroidea</taxon>
        <taxon>Muridae</taxon>
        <taxon>Murinae</taxon>
        <taxon>Mus</taxon>
        <taxon>Mus</taxon>
    </lineage>
</organism>
<comment type="function">
    <text>Potential odorant receptor.</text>
</comment>
<comment type="subcellular location">
    <subcellularLocation>
        <location evidence="3">Cell membrane</location>
        <topology evidence="1">Multi-pass membrane protein</topology>
    </subcellularLocation>
</comment>
<comment type="similarity">
    <text evidence="2">Belongs to the G-protein coupled receptor 1 family.</text>
</comment>
<comment type="caution">
    <text evidence="3">Defined as a pseudogene by MGI. However, proteomics data suggest the existence of the protein.</text>
</comment>
<accession>Q8VGS1</accession>
<reference key="1">
    <citation type="journal article" date="2002" name="Nat. Neurosci.">
        <title>The olfactory receptor gene superfamily of the mouse.</title>
        <authorList>
            <person name="Zhang X."/>
            <person name="Firestein S."/>
        </authorList>
    </citation>
    <scope>NUCLEOTIDE SEQUENCE [GENOMIC DNA]</scope>
</reference>
<reference key="2">
    <citation type="journal article" date="2002" name="Hum. Mol. Genet.">
        <title>Different evolutionary processes shaped the mouse and human olfactory receptor gene families.</title>
        <authorList>
            <person name="Young J.M."/>
            <person name="Friedman C."/>
            <person name="Williams E.M."/>
            <person name="Ross J.A."/>
            <person name="Tonnes-Priddy L."/>
            <person name="Trask B.J."/>
        </authorList>
    </citation>
    <scope>NUCLEOTIDE SEQUENCE [GENOMIC DNA]</scope>
</reference>
<reference key="3">
    <citation type="journal article" date="2002" name="Hum. Mol. Genet.">
        <authorList>
            <person name="Young J.M."/>
            <person name="Friedman C."/>
            <person name="Williams E.M."/>
            <person name="Ross J.A."/>
            <person name="Tonnes-Priddy L."/>
            <person name="Trask B.J."/>
        </authorList>
    </citation>
    <scope>ERRATUM OF PUBMED:11875048</scope>
</reference>
<gene>
    <name evidence="3" type="primary">Or8u3</name>
    <name evidence="4" type="synonym">Mor185-3</name>
    <name evidence="3" type="synonym">Olfr1038</name>
    <name evidence="4" type="synonym">Olfr1038-ps</name>
    <name evidence="4" type="synonym">Or8u3-ps</name>
</gene>
<proteinExistence type="inferred from homology"/>